<dbReference type="EMBL" id="AB473866">
    <property type="protein sequence ID" value="BAH10577.1"/>
    <property type="molecule type" value="mRNA"/>
</dbReference>
<dbReference type="EMBL" id="AC021666">
    <property type="protein sequence ID" value="AAG52312.1"/>
    <property type="molecule type" value="Genomic_DNA"/>
</dbReference>
<dbReference type="EMBL" id="CP002684">
    <property type="protein sequence ID" value="AEE31837.1"/>
    <property type="molecule type" value="Genomic_DNA"/>
</dbReference>
<dbReference type="EMBL" id="DQ056480">
    <property type="protein sequence ID" value="AAY78637.1"/>
    <property type="molecule type" value="mRNA"/>
</dbReference>
<dbReference type="PIR" id="H86481">
    <property type="entry name" value="H86481"/>
</dbReference>
<dbReference type="RefSeq" id="NP_174832.1">
    <property type="nucleotide sequence ID" value="NM_103296.4"/>
</dbReference>
<dbReference type="SMR" id="Q9C8V8"/>
<dbReference type="STRING" id="3702.Q9C8V8"/>
<dbReference type="PaxDb" id="3702-AT1G36000.1"/>
<dbReference type="EnsemblPlants" id="AT1G36000.1">
    <property type="protein sequence ID" value="AT1G36000.1"/>
    <property type="gene ID" value="AT1G36000"/>
</dbReference>
<dbReference type="GeneID" id="840503"/>
<dbReference type="Gramene" id="AT1G36000.1">
    <property type="protein sequence ID" value="AT1G36000.1"/>
    <property type="gene ID" value="AT1G36000"/>
</dbReference>
<dbReference type="KEGG" id="ath:AT1G36000"/>
<dbReference type="Araport" id="AT1G36000"/>
<dbReference type="TAIR" id="AT1G36000">
    <property type="gene designation" value="LBD5"/>
</dbReference>
<dbReference type="HOGENOM" id="CLU_058353_8_0_1"/>
<dbReference type="InParanoid" id="Q9C8V8"/>
<dbReference type="OMA" id="NCAFAAY"/>
<dbReference type="PhylomeDB" id="Q9C8V8"/>
<dbReference type="PRO" id="PR:Q9C8V8"/>
<dbReference type="Proteomes" id="UP000006548">
    <property type="component" value="Chromosome 1"/>
</dbReference>
<dbReference type="ExpressionAtlas" id="Q9C8V8">
    <property type="expression patterns" value="baseline and differential"/>
</dbReference>
<dbReference type="InterPro" id="IPR004883">
    <property type="entry name" value="LOB"/>
</dbReference>
<dbReference type="PANTHER" id="PTHR31301">
    <property type="entry name" value="LOB DOMAIN-CONTAINING PROTEIN 4-RELATED"/>
    <property type="match status" value="1"/>
</dbReference>
<dbReference type="PANTHER" id="PTHR31301:SF103">
    <property type="entry name" value="LOB DOMAIN-CONTAINING PROTEIN 5-RELATED"/>
    <property type="match status" value="1"/>
</dbReference>
<dbReference type="Pfam" id="PF03195">
    <property type="entry name" value="LOB"/>
    <property type="match status" value="1"/>
</dbReference>
<dbReference type="PROSITE" id="PS50891">
    <property type="entry name" value="LOB"/>
    <property type="match status" value="1"/>
</dbReference>
<protein>
    <recommendedName>
        <fullName>LOB domain-containing protein 5</fullName>
    </recommendedName>
    <alternativeName>
        <fullName>ASYMMETRIC LEAVES 2-like protein 33</fullName>
        <shortName>AS2-like protein 33</shortName>
    </alternativeName>
</protein>
<sequence length="122" mass="14259">MEPLGNRRPCSVCITKNRNCPRFCEYAEYFPYELQSQYESANELFGTPNIITMMQHAPEEKKQMLATSIIMEGNAWTEDPISGGFGMIQKLMWKIMLHKAYLRELQEKIKEEKEKKPASSLY</sequence>
<proteinExistence type="evidence at transcript level"/>
<organism>
    <name type="scientific">Arabidopsis thaliana</name>
    <name type="common">Mouse-ear cress</name>
    <dbReference type="NCBI Taxonomy" id="3702"/>
    <lineage>
        <taxon>Eukaryota</taxon>
        <taxon>Viridiplantae</taxon>
        <taxon>Streptophyta</taxon>
        <taxon>Embryophyta</taxon>
        <taxon>Tracheophyta</taxon>
        <taxon>Spermatophyta</taxon>
        <taxon>Magnoliopsida</taxon>
        <taxon>eudicotyledons</taxon>
        <taxon>Gunneridae</taxon>
        <taxon>Pentapetalae</taxon>
        <taxon>rosids</taxon>
        <taxon>malvids</taxon>
        <taxon>Brassicales</taxon>
        <taxon>Brassicaceae</taxon>
        <taxon>Camelineae</taxon>
        <taxon>Arabidopsis</taxon>
    </lineage>
</organism>
<keyword id="KW-1185">Reference proteome</keyword>
<accession>Q9C8V8</accession>
<accession>B7XG87</accession>
<accession>Q4PT06</accession>
<name>LBD5_ARATH</name>
<evidence type="ECO:0000255" key="1">
    <source>
        <dbReference type="PROSITE-ProRule" id="PRU00291"/>
    </source>
</evidence>
<evidence type="ECO:0000305" key="2"/>
<gene>
    <name type="primary">LBD5</name>
    <name type="synonym">ASL33</name>
    <name type="ordered locus">At1g36000</name>
    <name type="ORF">T22A15.8</name>
</gene>
<feature type="chain" id="PRO_0000132256" description="LOB domain-containing protein 5">
    <location>
        <begin position="1"/>
        <end position="122"/>
    </location>
</feature>
<feature type="domain" description="LOB" evidence="1">
    <location>
        <begin position="8"/>
        <end position="109"/>
    </location>
</feature>
<comment type="similarity">
    <text evidence="2">Belongs to the LOB domain-containing protein family.</text>
</comment>
<reference key="1">
    <citation type="journal article" date="2009" name="Plant J.">
        <title>Characterization of genes in the ASYMMETRIC LEAVES2/LATERAL ORGAN BOUNDARIES (AS2/LOB) family in Arabidopsis thaliana, and functional and molecular comparisons between AS2 and other family members.</title>
        <authorList>
            <person name="Matsumura Y."/>
            <person name="Iwakawa H."/>
            <person name="Machida Y."/>
            <person name="Machida C."/>
        </authorList>
    </citation>
    <scope>NUCLEOTIDE SEQUENCE [MRNA]</scope>
    <source>
        <strain>cv. Columbia</strain>
    </source>
</reference>
<reference key="2">
    <citation type="journal article" date="2000" name="Nature">
        <title>Sequence and analysis of chromosome 1 of the plant Arabidopsis thaliana.</title>
        <authorList>
            <person name="Theologis A."/>
            <person name="Ecker J.R."/>
            <person name="Palm C.J."/>
            <person name="Federspiel N.A."/>
            <person name="Kaul S."/>
            <person name="White O."/>
            <person name="Alonso J."/>
            <person name="Altafi H."/>
            <person name="Araujo R."/>
            <person name="Bowman C.L."/>
            <person name="Brooks S.Y."/>
            <person name="Buehler E."/>
            <person name="Chan A."/>
            <person name="Chao Q."/>
            <person name="Chen H."/>
            <person name="Cheuk R.F."/>
            <person name="Chin C.W."/>
            <person name="Chung M.K."/>
            <person name="Conn L."/>
            <person name="Conway A.B."/>
            <person name="Conway A.R."/>
            <person name="Creasy T.H."/>
            <person name="Dewar K."/>
            <person name="Dunn P."/>
            <person name="Etgu P."/>
            <person name="Feldblyum T.V."/>
            <person name="Feng J.-D."/>
            <person name="Fong B."/>
            <person name="Fujii C.Y."/>
            <person name="Gill J.E."/>
            <person name="Goldsmith A.D."/>
            <person name="Haas B."/>
            <person name="Hansen N.F."/>
            <person name="Hughes B."/>
            <person name="Huizar L."/>
            <person name="Hunter J.L."/>
            <person name="Jenkins J."/>
            <person name="Johnson-Hopson C."/>
            <person name="Khan S."/>
            <person name="Khaykin E."/>
            <person name="Kim C.J."/>
            <person name="Koo H.L."/>
            <person name="Kremenetskaia I."/>
            <person name="Kurtz D.B."/>
            <person name="Kwan A."/>
            <person name="Lam B."/>
            <person name="Langin-Hooper S."/>
            <person name="Lee A."/>
            <person name="Lee J.M."/>
            <person name="Lenz C.A."/>
            <person name="Li J.H."/>
            <person name="Li Y.-P."/>
            <person name="Lin X."/>
            <person name="Liu S.X."/>
            <person name="Liu Z.A."/>
            <person name="Luros J.S."/>
            <person name="Maiti R."/>
            <person name="Marziali A."/>
            <person name="Militscher J."/>
            <person name="Miranda M."/>
            <person name="Nguyen M."/>
            <person name="Nierman W.C."/>
            <person name="Osborne B.I."/>
            <person name="Pai G."/>
            <person name="Peterson J."/>
            <person name="Pham P.K."/>
            <person name="Rizzo M."/>
            <person name="Rooney T."/>
            <person name="Rowley D."/>
            <person name="Sakano H."/>
            <person name="Salzberg S.L."/>
            <person name="Schwartz J.R."/>
            <person name="Shinn P."/>
            <person name="Southwick A.M."/>
            <person name="Sun H."/>
            <person name="Tallon L.J."/>
            <person name="Tambunga G."/>
            <person name="Toriumi M.J."/>
            <person name="Town C.D."/>
            <person name="Utterback T."/>
            <person name="Van Aken S."/>
            <person name="Vaysberg M."/>
            <person name="Vysotskaia V.S."/>
            <person name="Walker M."/>
            <person name="Wu D."/>
            <person name="Yu G."/>
            <person name="Fraser C.M."/>
            <person name="Venter J.C."/>
            <person name="Davis R.W."/>
        </authorList>
    </citation>
    <scope>NUCLEOTIDE SEQUENCE [LARGE SCALE GENOMIC DNA]</scope>
    <source>
        <strain>cv. Columbia</strain>
    </source>
</reference>
<reference key="3">
    <citation type="journal article" date="2017" name="Plant J.">
        <title>Araport11: a complete reannotation of the Arabidopsis thaliana reference genome.</title>
        <authorList>
            <person name="Cheng C.Y."/>
            <person name="Krishnakumar V."/>
            <person name="Chan A.P."/>
            <person name="Thibaud-Nissen F."/>
            <person name="Schobel S."/>
            <person name="Town C.D."/>
        </authorList>
    </citation>
    <scope>GENOME REANNOTATION</scope>
    <source>
        <strain>cv. Columbia</strain>
    </source>
</reference>
<reference key="4">
    <citation type="submission" date="2005-05" db="EMBL/GenBank/DDBJ databases">
        <authorList>
            <person name="Underwood B.A."/>
            <person name="Xiao Y.-L."/>
            <person name="Moskal W.A. Jr."/>
            <person name="Monaghan E.L."/>
            <person name="Wang W."/>
            <person name="Redman J.C."/>
            <person name="Wu H.C."/>
            <person name="Utterback T."/>
            <person name="Town C.D."/>
        </authorList>
    </citation>
    <scope>NUCLEOTIDE SEQUENCE [LARGE SCALE MRNA]</scope>
    <source>
        <strain>cv. Columbia</strain>
    </source>
</reference>
<reference key="5">
    <citation type="journal article" date="2002" name="Plant Physiol.">
        <title>The LATERAL ORGAN BOUNDARIES gene defines a novel, plant-specific gene family.</title>
        <authorList>
            <person name="Shuai B."/>
            <person name="Reynaga-Pena C.G."/>
            <person name="Springer P.S."/>
        </authorList>
    </citation>
    <scope>GENE FAMILY</scope>
    <scope>NOMENCLATURE</scope>
</reference>
<reference key="6">
    <citation type="journal article" date="2002" name="Plant Cell Physiol.">
        <title>The ASYMMETRIC LEAVES2 gene of Arabidopsis thaliana, required for formation of a symmetric flat leaf lamina, encodes a member of a novel family of proteins characterized by cysteine repeats and a leucine zipper.</title>
        <authorList>
            <person name="Iwakawa H."/>
            <person name="Ueno Y."/>
            <person name="Semiarti E."/>
            <person name="Onouchi H."/>
            <person name="Kojima S."/>
            <person name="Tsukaya H."/>
            <person name="Hasebe M."/>
            <person name="Soma T."/>
            <person name="Ikezaki M."/>
            <person name="Machida C."/>
            <person name="Machida Y."/>
        </authorList>
    </citation>
    <scope>GENE FAMILY</scope>
    <scope>NOMENCLATURE</scope>
</reference>